<name>RL7_SALNS</name>
<reference key="1">
    <citation type="journal article" date="2011" name="J. Bacteriol.">
        <title>Comparative genomics of 28 Salmonella enterica isolates: evidence for CRISPR-mediated adaptive sublineage evolution.</title>
        <authorList>
            <person name="Fricke W.F."/>
            <person name="Mammel M.K."/>
            <person name="McDermott P.F."/>
            <person name="Tartera C."/>
            <person name="White D.G."/>
            <person name="Leclerc J.E."/>
            <person name="Ravel J."/>
            <person name="Cebula T.A."/>
        </authorList>
    </citation>
    <scope>NUCLEOTIDE SEQUENCE [LARGE SCALE GENOMIC DNA]</scope>
    <source>
        <strain>SL254</strain>
    </source>
</reference>
<sequence length="121" mass="12299">MSITKDQIIEAVSAMSVMDVVELISAMEEKFGVSAAAAVAVAAGPAEAAEEKTEFDVILKAAGANKVAVIKAVRGATGLGLKEAKDLVESAPAALKEGVSKDDAEALKKSLEEAGAEVEVK</sequence>
<gene>
    <name evidence="1" type="primary">rplL</name>
    <name type="ordered locus">SNSL254_A4484</name>
</gene>
<proteinExistence type="inferred from homology"/>
<keyword id="KW-0687">Ribonucleoprotein</keyword>
<keyword id="KW-0689">Ribosomal protein</keyword>
<dbReference type="EMBL" id="CP001113">
    <property type="protein sequence ID" value="ACF61398.1"/>
    <property type="molecule type" value="Genomic_DNA"/>
</dbReference>
<dbReference type="RefSeq" id="WP_000028882.1">
    <property type="nucleotide sequence ID" value="NZ_CCMR01000001.1"/>
</dbReference>
<dbReference type="SMR" id="B4T0Y8"/>
<dbReference type="GeneID" id="89551069"/>
<dbReference type="KEGG" id="see:SNSL254_A4484"/>
<dbReference type="HOGENOM" id="CLU_086499_3_2_6"/>
<dbReference type="Proteomes" id="UP000008824">
    <property type="component" value="Chromosome"/>
</dbReference>
<dbReference type="GO" id="GO:0022625">
    <property type="term" value="C:cytosolic large ribosomal subunit"/>
    <property type="evidence" value="ECO:0007669"/>
    <property type="project" value="TreeGrafter"/>
</dbReference>
<dbReference type="GO" id="GO:0003729">
    <property type="term" value="F:mRNA binding"/>
    <property type="evidence" value="ECO:0007669"/>
    <property type="project" value="TreeGrafter"/>
</dbReference>
<dbReference type="GO" id="GO:0003735">
    <property type="term" value="F:structural constituent of ribosome"/>
    <property type="evidence" value="ECO:0007669"/>
    <property type="project" value="InterPro"/>
</dbReference>
<dbReference type="GO" id="GO:0006412">
    <property type="term" value="P:translation"/>
    <property type="evidence" value="ECO:0007669"/>
    <property type="project" value="UniProtKB-UniRule"/>
</dbReference>
<dbReference type="CDD" id="cd00387">
    <property type="entry name" value="Ribosomal_L7_L12"/>
    <property type="match status" value="1"/>
</dbReference>
<dbReference type="FunFam" id="1.20.5.710:FF:000001">
    <property type="entry name" value="50S ribosomal protein L7/L12"/>
    <property type="match status" value="1"/>
</dbReference>
<dbReference type="FunFam" id="3.30.1390.10:FF:000001">
    <property type="entry name" value="50S ribosomal protein L7/L12"/>
    <property type="match status" value="1"/>
</dbReference>
<dbReference type="Gene3D" id="3.30.1390.10">
    <property type="match status" value="1"/>
</dbReference>
<dbReference type="Gene3D" id="1.20.5.710">
    <property type="entry name" value="Single helix bin"/>
    <property type="match status" value="1"/>
</dbReference>
<dbReference type="HAMAP" id="MF_00368">
    <property type="entry name" value="Ribosomal_bL12"/>
    <property type="match status" value="1"/>
</dbReference>
<dbReference type="InterPro" id="IPR000206">
    <property type="entry name" value="Ribosomal_bL12"/>
</dbReference>
<dbReference type="InterPro" id="IPR013823">
    <property type="entry name" value="Ribosomal_bL12_C"/>
</dbReference>
<dbReference type="InterPro" id="IPR014719">
    <property type="entry name" value="Ribosomal_bL12_C/ClpS-like"/>
</dbReference>
<dbReference type="InterPro" id="IPR008932">
    <property type="entry name" value="Ribosomal_bL12_oligo"/>
</dbReference>
<dbReference type="InterPro" id="IPR036235">
    <property type="entry name" value="Ribosomal_bL12_oligo_N_sf"/>
</dbReference>
<dbReference type="NCBIfam" id="TIGR00855">
    <property type="entry name" value="L12"/>
    <property type="match status" value="1"/>
</dbReference>
<dbReference type="PANTHER" id="PTHR45987">
    <property type="entry name" value="39S RIBOSOMAL PROTEIN L12"/>
    <property type="match status" value="1"/>
</dbReference>
<dbReference type="PANTHER" id="PTHR45987:SF4">
    <property type="entry name" value="LARGE RIBOSOMAL SUBUNIT PROTEIN BL12M"/>
    <property type="match status" value="1"/>
</dbReference>
<dbReference type="Pfam" id="PF00542">
    <property type="entry name" value="Ribosomal_L12"/>
    <property type="match status" value="1"/>
</dbReference>
<dbReference type="Pfam" id="PF16320">
    <property type="entry name" value="Ribosomal_L12_N"/>
    <property type="match status" value="1"/>
</dbReference>
<dbReference type="SUPFAM" id="SSF54736">
    <property type="entry name" value="ClpS-like"/>
    <property type="match status" value="1"/>
</dbReference>
<dbReference type="SUPFAM" id="SSF48300">
    <property type="entry name" value="Ribosomal protein L7/12, oligomerisation (N-terminal) domain"/>
    <property type="match status" value="1"/>
</dbReference>
<organism>
    <name type="scientific">Salmonella newport (strain SL254)</name>
    <dbReference type="NCBI Taxonomy" id="423368"/>
    <lineage>
        <taxon>Bacteria</taxon>
        <taxon>Pseudomonadati</taxon>
        <taxon>Pseudomonadota</taxon>
        <taxon>Gammaproteobacteria</taxon>
        <taxon>Enterobacterales</taxon>
        <taxon>Enterobacteriaceae</taxon>
        <taxon>Salmonella</taxon>
    </lineage>
</organism>
<protein>
    <recommendedName>
        <fullName evidence="1">Large ribosomal subunit protein bL12</fullName>
    </recommendedName>
    <alternativeName>
        <fullName evidence="2">50S ribosomal protein L7/L12</fullName>
    </alternativeName>
</protein>
<comment type="function">
    <text evidence="1">Forms part of the ribosomal stalk which helps the ribosome interact with GTP-bound translation factors. Is thus essential for accurate translation.</text>
</comment>
<comment type="subunit">
    <text evidence="1">Homodimer. Part of the ribosomal stalk of the 50S ribosomal subunit. Forms a multimeric L10(L12)X complex, where L10 forms an elongated spine to which 2 to 4 L12 dimers bind in a sequential fashion. Binds GTP-bound translation factors.</text>
</comment>
<comment type="similarity">
    <text evidence="1">Belongs to the bacterial ribosomal protein bL12 family.</text>
</comment>
<feature type="chain" id="PRO_1000121486" description="Large ribosomal subunit protein bL12">
    <location>
        <begin position="1"/>
        <end position="121"/>
    </location>
</feature>
<accession>B4T0Y8</accession>
<evidence type="ECO:0000255" key="1">
    <source>
        <dbReference type="HAMAP-Rule" id="MF_00368"/>
    </source>
</evidence>
<evidence type="ECO:0000305" key="2"/>